<evidence type="ECO:0000255" key="1">
    <source>
        <dbReference type="HAMAP-Rule" id="MF_00059"/>
    </source>
</evidence>
<dbReference type="EC" id="2.7.7.6" evidence="1"/>
<dbReference type="EMBL" id="AE017244">
    <property type="protein sequence ID" value="AAZ53542.1"/>
    <property type="molecule type" value="Genomic_DNA"/>
</dbReference>
<dbReference type="RefSeq" id="WP_011290054.1">
    <property type="nucleotide sequence ID" value="NC_007332.1"/>
</dbReference>
<dbReference type="SMR" id="Q4A8J7"/>
<dbReference type="KEGG" id="mhp:MHP7448_0168"/>
<dbReference type="HOGENOM" id="CLU_053084_0_1_14"/>
<dbReference type="Proteomes" id="UP000000553">
    <property type="component" value="Chromosome"/>
</dbReference>
<dbReference type="GO" id="GO:0005737">
    <property type="term" value="C:cytoplasm"/>
    <property type="evidence" value="ECO:0007669"/>
    <property type="project" value="UniProtKB-ARBA"/>
</dbReference>
<dbReference type="GO" id="GO:0000428">
    <property type="term" value="C:DNA-directed RNA polymerase complex"/>
    <property type="evidence" value="ECO:0007669"/>
    <property type="project" value="UniProtKB-KW"/>
</dbReference>
<dbReference type="GO" id="GO:0003677">
    <property type="term" value="F:DNA binding"/>
    <property type="evidence" value="ECO:0007669"/>
    <property type="project" value="UniProtKB-UniRule"/>
</dbReference>
<dbReference type="GO" id="GO:0003899">
    <property type="term" value="F:DNA-directed RNA polymerase activity"/>
    <property type="evidence" value="ECO:0007669"/>
    <property type="project" value="UniProtKB-UniRule"/>
</dbReference>
<dbReference type="GO" id="GO:0046983">
    <property type="term" value="F:protein dimerization activity"/>
    <property type="evidence" value="ECO:0007669"/>
    <property type="project" value="InterPro"/>
</dbReference>
<dbReference type="GO" id="GO:0006351">
    <property type="term" value="P:DNA-templated transcription"/>
    <property type="evidence" value="ECO:0007669"/>
    <property type="project" value="UniProtKB-UniRule"/>
</dbReference>
<dbReference type="CDD" id="cd06928">
    <property type="entry name" value="RNAP_alpha_NTD"/>
    <property type="match status" value="1"/>
</dbReference>
<dbReference type="Gene3D" id="1.10.150.20">
    <property type="entry name" value="5' to 3' exonuclease, C-terminal subdomain"/>
    <property type="match status" value="1"/>
</dbReference>
<dbReference type="Gene3D" id="2.170.120.12">
    <property type="entry name" value="DNA-directed RNA polymerase, insert domain"/>
    <property type="match status" value="1"/>
</dbReference>
<dbReference type="Gene3D" id="3.30.1360.10">
    <property type="entry name" value="RNA polymerase, RBP11-like subunit"/>
    <property type="match status" value="1"/>
</dbReference>
<dbReference type="HAMAP" id="MF_00059">
    <property type="entry name" value="RNApol_bact_RpoA"/>
    <property type="match status" value="1"/>
</dbReference>
<dbReference type="InterPro" id="IPR011262">
    <property type="entry name" value="DNA-dir_RNA_pol_insert"/>
</dbReference>
<dbReference type="InterPro" id="IPR011263">
    <property type="entry name" value="DNA-dir_RNA_pol_RpoA/D/Rpb3"/>
</dbReference>
<dbReference type="InterPro" id="IPR011773">
    <property type="entry name" value="DNA-dir_RpoA"/>
</dbReference>
<dbReference type="InterPro" id="IPR036603">
    <property type="entry name" value="RBP11-like"/>
</dbReference>
<dbReference type="InterPro" id="IPR011260">
    <property type="entry name" value="RNAP_asu_C"/>
</dbReference>
<dbReference type="InterPro" id="IPR036643">
    <property type="entry name" value="RNApol_insert_sf"/>
</dbReference>
<dbReference type="NCBIfam" id="NF003519">
    <property type="entry name" value="PRK05182.2-5"/>
    <property type="match status" value="1"/>
</dbReference>
<dbReference type="NCBIfam" id="TIGR02027">
    <property type="entry name" value="rpoA"/>
    <property type="match status" value="1"/>
</dbReference>
<dbReference type="Pfam" id="PF01000">
    <property type="entry name" value="RNA_pol_A_bac"/>
    <property type="match status" value="1"/>
</dbReference>
<dbReference type="Pfam" id="PF03118">
    <property type="entry name" value="RNA_pol_A_CTD"/>
    <property type="match status" value="1"/>
</dbReference>
<dbReference type="Pfam" id="PF01193">
    <property type="entry name" value="RNA_pol_L"/>
    <property type="match status" value="1"/>
</dbReference>
<dbReference type="SMART" id="SM00662">
    <property type="entry name" value="RPOLD"/>
    <property type="match status" value="1"/>
</dbReference>
<dbReference type="SUPFAM" id="SSF47789">
    <property type="entry name" value="C-terminal domain of RNA polymerase alpha subunit"/>
    <property type="match status" value="1"/>
</dbReference>
<dbReference type="SUPFAM" id="SSF56553">
    <property type="entry name" value="Insert subdomain of RNA polymerase alpha subunit"/>
    <property type="match status" value="1"/>
</dbReference>
<dbReference type="SUPFAM" id="SSF55257">
    <property type="entry name" value="RBP11-like subunits of RNA polymerase"/>
    <property type="match status" value="1"/>
</dbReference>
<protein>
    <recommendedName>
        <fullName evidence="1">DNA-directed RNA polymerase subunit alpha</fullName>
        <shortName evidence="1">RNAP subunit alpha</shortName>
        <ecNumber evidence="1">2.7.7.6</ecNumber>
    </recommendedName>
    <alternativeName>
        <fullName evidence="1">RNA polymerase subunit alpha</fullName>
    </alternativeName>
    <alternativeName>
        <fullName evidence="1">Transcriptase subunit alpha</fullName>
    </alternativeName>
</protein>
<accession>Q4A8J7</accession>
<keyword id="KW-0240">DNA-directed RNA polymerase</keyword>
<keyword id="KW-0548">Nucleotidyltransferase</keyword>
<keyword id="KW-0804">Transcription</keyword>
<keyword id="KW-0808">Transferase</keyword>
<name>RPOA_MESH7</name>
<sequence length="332" mass="37373">MKKHAKVYYSENLVEQVNEFETSFEIKPLERGLGNTLGNALRRTVLSSIPSCAVFGVKIEGIKHEFTVLDDVIEDVVTILNNLKRVRFFYNPSVFSQNSIHVASFLGQKAGQIYARDIESHSGLKIVNPDLYIADVSKVGALKFELFITNGKGFVDFETNKKYVNEVISRLESQIEGSVLAVDSDFSPVLNANYQAVEINSASPIIEEKLNFSIKTDGSIFAKDALSQGAKILIAHLNLLADVENLNKFSADFFGDQEIKEEPIRRFSNSIDALDLSVRSLNALRRAQYYKISDIEKLSQDDFENIKNLGRKSVQEIMEKLQNYKNENKGEN</sequence>
<proteinExistence type="inferred from homology"/>
<feature type="chain" id="PRO_0000225281" description="DNA-directed RNA polymerase subunit alpha">
    <location>
        <begin position="1"/>
        <end position="332"/>
    </location>
</feature>
<feature type="region of interest" description="Alpha N-terminal domain (alpha-NTD)" evidence="1">
    <location>
        <begin position="1"/>
        <end position="244"/>
    </location>
</feature>
<feature type="region of interest" description="Alpha C-terminal domain (alpha-CTD)" evidence="1">
    <location>
        <begin position="259"/>
        <end position="332"/>
    </location>
</feature>
<comment type="function">
    <text evidence="1">DNA-dependent RNA polymerase catalyzes the transcription of DNA into RNA using the four ribonucleoside triphosphates as substrates.</text>
</comment>
<comment type="catalytic activity">
    <reaction evidence="1">
        <text>RNA(n) + a ribonucleoside 5'-triphosphate = RNA(n+1) + diphosphate</text>
        <dbReference type="Rhea" id="RHEA:21248"/>
        <dbReference type="Rhea" id="RHEA-COMP:14527"/>
        <dbReference type="Rhea" id="RHEA-COMP:17342"/>
        <dbReference type="ChEBI" id="CHEBI:33019"/>
        <dbReference type="ChEBI" id="CHEBI:61557"/>
        <dbReference type="ChEBI" id="CHEBI:140395"/>
        <dbReference type="EC" id="2.7.7.6"/>
    </reaction>
</comment>
<comment type="subunit">
    <text evidence="1">Homodimer. The RNAP catalytic core consists of 2 alpha, 1 beta, 1 beta' and 1 omega subunit. When a sigma factor is associated with the core the holoenzyme is formed, which can initiate transcription.</text>
</comment>
<comment type="domain">
    <text evidence="1">The N-terminal domain is essential for RNAP assembly and basal transcription, whereas the C-terminal domain is involved in interaction with transcriptional regulators and with upstream promoter elements.</text>
</comment>
<comment type="similarity">
    <text evidence="1">Belongs to the RNA polymerase alpha chain family.</text>
</comment>
<organism>
    <name type="scientific">Mesomycoplasma hyopneumoniae (strain 7448)</name>
    <name type="common">Mycoplasma hyopneumoniae</name>
    <dbReference type="NCBI Taxonomy" id="262722"/>
    <lineage>
        <taxon>Bacteria</taxon>
        <taxon>Bacillati</taxon>
        <taxon>Mycoplasmatota</taxon>
        <taxon>Mycoplasmoidales</taxon>
        <taxon>Metamycoplasmataceae</taxon>
        <taxon>Mesomycoplasma</taxon>
    </lineage>
</organism>
<gene>
    <name evidence="1" type="primary">rpoA</name>
    <name type="ordered locus">MHP7448_0168</name>
</gene>
<reference key="1">
    <citation type="journal article" date="2005" name="J. Bacteriol.">
        <title>Swine and poultry pathogens: the complete genome sequences of two strains of Mycoplasma hyopneumoniae and a strain of Mycoplasma synoviae.</title>
        <authorList>
            <person name="Vasconcelos A.T.R."/>
            <person name="Ferreira H.B."/>
            <person name="Bizarro C.V."/>
            <person name="Bonatto S.L."/>
            <person name="Carvalho M.O."/>
            <person name="Pinto P.M."/>
            <person name="Almeida D.F."/>
            <person name="Almeida L.G.P."/>
            <person name="Almeida R."/>
            <person name="Alves-Junior L."/>
            <person name="Assuncao E.N."/>
            <person name="Azevedo V.A.C."/>
            <person name="Bogo M.R."/>
            <person name="Brigido M.M."/>
            <person name="Brocchi M."/>
            <person name="Burity H.A."/>
            <person name="Camargo A.A."/>
            <person name="Camargo S.S."/>
            <person name="Carepo M.S."/>
            <person name="Carraro D.M."/>
            <person name="de Mattos Cascardo J.C."/>
            <person name="Castro L.A."/>
            <person name="Cavalcanti G."/>
            <person name="Chemale G."/>
            <person name="Collevatti R.G."/>
            <person name="Cunha C.W."/>
            <person name="Dallagiovanna B."/>
            <person name="Dambros B.P."/>
            <person name="Dellagostin O.A."/>
            <person name="Falcao C."/>
            <person name="Fantinatti-Garboggini F."/>
            <person name="Felipe M.S.S."/>
            <person name="Fiorentin L."/>
            <person name="Franco G.R."/>
            <person name="Freitas N.S.A."/>
            <person name="Frias D."/>
            <person name="Grangeiro T.B."/>
            <person name="Grisard E.C."/>
            <person name="Guimaraes C.T."/>
            <person name="Hungria M."/>
            <person name="Jardim S.N."/>
            <person name="Krieger M.A."/>
            <person name="Laurino J.P."/>
            <person name="Lima L.F.A."/>
            <person name="Lopes M.I."/>
            <person name="Loreto E.L.S."/>
            <person name="Madeira H.M.F."/>
            <person name="Manfio G.P."/>
            <person name="Maranhao A.Q."/>
            <person name="Martinkovics C.T."/>
            <person name="Medeiros S.R.B."/>
            <person name="Moreira M.A.M."/>
            <person name="Neiva M."/>
            <person name="Ramalho-Neto C.E."/>
            <person name="Nicolas M.F."/>
            <person name="Oliveira S.C."/>
            <person name="Paixao R.F.C."/>
            <person name="Pedrosa F.O."/>
            <person name="Pena S.D.J."/>
            <person name="Pereira M."/>
            <person name="Pereira-Ferrari L."/>
            <person name="Piffer I."/>
            <person name="Pinto L.S."/>
            <person name="Potrich D.P."/>
            <person name="Salim A.C.M."/>
            <person name="Santos F.R."/>
            <person name="Schmitt R."/>
            <person name="Schneider M.P.C."/>
            <person name="Schrank A."/>
            <person name="Schrank I.S."/>
            <person name="Schuck A.F."/>
            <person name="Seuanez H.N."/>
            <person name="Silva D.W."/>
            <person name="Silva R."/>
            <person name="Silva S.C."/>
            <person name="Soares C.M.A."/>
            <person name="Souza K.R.L."/>
            <person name="Souza R.C."/>
            <person name="Staats C.C."/>
            <person name="Steffens M.B.R."/>
            <person name="Teixeira S.M.R."/>
            <person name="Urmenyi T.P."/>
            <person name="Vainstein M.H."/>
            <person name="Zuccherato L.W."/>
            <person name="Simpson A.J.G."/>
            <person name="Zaha A."/>
        </authorList>
    </citation>
    <scope>NUCLEOTIDE SEQUENCE [LARGE SCALE GENOMIC DNA]</scope>
    <source>
        <strain>7448</strain>
    </source>
</reference>